<organism>
    <name type="scientific">Bacteroides fragilis (strain ATCC 25285 / DSM 2151 / CCUG 4856 / JCM 11019 / LMG 10263 / NCTC 9343 / Onslow / VPI 2553 / EN-2)</name>
    <dbReference type="NCBI Taxonomy" id="272559"/>
    <lineage>
        <taxon>Bacteria</taxon>
        <taxon>Pseudomonadati</taxon>
        <taxon>Bacteroidota</taxon>
        <taxon>Bacteroidia</taxon>
        <taxon>Bacteroidales</taxon>
        <taxon>Bacteroidaceae</taxon>
        <taxon>Bacteroides</taxon>
    </lineage>
</organism>
<keyword id="KW-1003">Cell membrane</keyword>
<keyword id="KW-0210">Decarboxylase</keyword>
<keyword id="KW-0444">Lipid biosynthesis</keyword>
<keyword id="KW-0443">Lipid metabolism</keyword>
<keyword id="KW-0456">Lyase</keyword>
<keyword id="KW-0472">Membrane</keyword>
<keyword id="KW-0594">Phospholipid biosynthesis</keyword>
<keyword id="KW-1208">Phospholipid metabolism</keyword>
<keyword id="KW-0670">Pyruvate</keyword>
<keyword id="KW-0865">Zymogen</keyword>
<reference key="1">
    <citation type="journal article" date="2005" name="Science">
        <title>Extensive DNA inversions in the B. fragilis genome control variable gene expression.</title>
        <authorList>
            <person name="Cerdeno-Tarraga A.-M."/>
            <person name="Patrick S."/>
            <person name="Crossman L.C."/>
            <person name="Blakely G."/>
            <person name="Abratt V."/>
            <person name="Lennard N."/>
            <person name="Poxton I."/>
            <person name="Duerden B."/>
            <person name="Harris B."/>
            <person name="Quail M.A."/>
            <person name="Barron A."/>
            <person name="Clark L."/>
            <person name="Corton C."/>
            <person name="Doggett J."/>
            <person name="Holden M.T.G."/>
            <person name="Larke N."/>
            <person name="Line A."/>
            <person name="Lord A."/>
            <person name="Norbertczak H."/>
            <person name="Ormond D."/>
            <person name="Price C."/>
            <person name="Rabbinowitsch E."/>
            <person name="Woodward J."/>
            <person name="Barrell B.G."/>
            <person name="Parkhill J."/>
        </authorList>
    </citation>
    <scope>NUCLEOTIDE SEQUENCE [LARGE SCALE GENOMIC DNA]</scope>
    <source>
        <strain>ATCC 25285 / DSM 2151 / CCUG 4856 / JCM 11019 / LMG 10263 / NCTC 9343 / Onslow / VPI 2553 / EN-2</strain>
    </source>
</reference>
<accession>Q5LHJ3</accession>
<name>PSD_BACFN</name>
<sequence length="228" mass="26017">MGRLKKLKKIRIHREGTHILWGSFFLLLIINLALYWGIDCKIPFYLVALVSIVVYLLMVNFFRCPIRLFGQDTEKIVVAPADGKIVVIEEVDEHEYFHDRRIMVSIFMSILNVHANWYPVDGVVKKVTHDNGKFMKAWLPKASTENERSMIVIETPEGVEVMARQIAGAMARRIVTYAEPGEECYIDEHLGFIKFGSRVDVYLPLGTEICVSMGQLTTGNQTVIAKLK</sequence>
<feature type="chain" id="PRO_0000262185" description="Phosphatidylserine decarboxylase beta chain" evidence="1">
    <location>
        <begin position="1"/>
        <end position="196"/>
    </location>
</feature>
<feature type="chain" id="PRO_0000262186" description="Phosphatidylserine decarboxylase alpha chain" evidence="1">
    <location>
        <begin position="197"/>
        <end position="228"/>
    </location>
</feature>
<feature type="active site" description="Schiff-base intermediate with substrate; via pyruvic acid" evidence="1">
    <location>
        <position position="197"/>
    </location>
</feature>
<feature type="site" description="Cleavage (non-hydrolytic); by autocatalysis" evidence="1">
    <location>
        <begin position="196"/>
        <end position="197"/>
    </location>
</feature>
<feature type="modified residue" description="Pyruvic acid (Ser); by autocatalysis" evidence="1">
    <location>
        <position position="197"/>
    </location>
</feature>
<evidence type="ECO:0000255" key="1">
    <source>
        <dbReference type="HAMAP-Rule" id="MF_00664"/>
    </source>
</evidence>
<dbReference type="EC" id="4.1.1.65" evidence="1"/>
<dbReference type="EMBL" id="CR626927">
    <property type="protein sequence ID" value="CAH06387.1"/>
    <property type="molecule type" value="Genomic_DNA"/>
</dbReference>
<dbReference type="RefSeq" id="WP_005784739.1">
    <property type="nucleotide sequence ID" value="NZ_UFTH01000001.1"/>
</dbReference>
<dbReference type="PaxDb" id="272559-BF9343_0608"/>
<dbReference type="KEGG" id="bfs:BF9343_0608"/>
<dbReference type="eggNOG" id="COG0688">
    <property type="taxonomic scope" value="Bacteria"/>
</dbReference>
<dbReference type="HOGENOM" id="CLU_072492_1_0_10"/>
<dbReference type="UniPathway" id="UPA00558">
    <property type="reaction ID" value="UER00616"/>
</dbReference>
<dbReference type="Proteomes" id="UP000006731">
    <property type="component" value="Chromosome"/>
</dbReference>
<dbReference type="GO" id="GO:0005886">
    <property type="term" value="C:plasma membrane"/>
    <property type="evidence" value="ECO:0007669"/>
    <property type="project" value="UniProtKB-SubCell"/>
</dbReference>
<dbReference type="GO" id="GO:0004609">
    <property type="term" value="F:phosphatidylserine decarboxylase activity"/>
    <property type="evidence" value="ECO:0007669"/>
    <property type="project" value="UniProtKB-UniRule"/>
</dbReference>
<dbReference type="GO" id="GO:0006646">
    <property type="term" value="P:phosphatidylethanolamine biosynthetic process"/>
    <property type="evidence" value="ECO:0007669"/>
    <property type="project" value="UniProtKB-UniRule"/>
</dbReference>
<dbReference type="HAMAP" id="MF_00664">
    <property type="entry name" value="PS_decarb_PSD_A"/>
    <property type="match status" value="1"/>
</dbReference>
<dbReference type="InterPro" id="IPR003817">
    <property type="entry name" value="PS_Dcarbxylase"/>
</dbReference>
<dbReference type="InterPro" id="IPR033175">
    <property type="entry name" value="PSD-A"/>
</dbReference>
<dbReference type="NCBIfam" id="NF003678">
    <property type="entry name" value="PRK05305.1-2"/>
    <property type="match status" value="1"/>
</dbReference>
<dbReference type="PANTHER" id="PTHR35809">
    <property type="entry name" value="ARCHAETIDYLSERINE DECARBOXYLASE PROENZYME-RELATED"/>
    <property type="match status" value="1"/>
</dbReference>
<dbReference type="PANTHER" id="PTHR35809:SF1">
    <property type="entry name" value="ARCHAETIDYLSERINE DECARBOXYLASE PROENZYME-RELATED"/>
    <property type="match status" value="1"/>
</dbReference>
<dbReference type="Pfam" id="PF02666">
    <property type="entry name" value="PS_Dcarbxylase"/>
    <property type="match status" value="1"/>
</dbReference>
<proteinExistence type="inferred from homology"/>
<gene>
    <name evidence="1" type="primary">psd</name>
    <name type="ordered locus">BF0640</name>
</gene>
<comment type="function">
    <text evidence="1">Catalyzes the formation of phosphatidylethanolamine (PtdEtn) from phosphatidylserine (PtdSer).</text>
</comment>
<comment type="catalytic activity">
    <reaction evidence="1">
        <text>a 1,2-diacyl-sn-glycero-3-phospho-L-serine + H(+) = a 1,2-diacyl-sn-glycero-3-phosphoethanolamine + CO2</text>
        <dbReference type="Rhea" id="RHEA:20828"/>
        <dbReference type="ChEBI" id="CHEBI:15378"/>
        <dbReference type="ChEBI" id="CHEBI:16526"/>
        <dbReference type="ChEBI" id="CHEBI:57262"/>
        <dbReference type="ChEBI" id="CHEBI:64612"/>
        <dbReference type="EC" id="4.1.1.65"/>
    </reaction>
</comment>
<comment type="cofactor">
    <cofactor evidence="1">
        <name>pyruvate</name>
        <dbReference type="ChEBI" id="CHEBI:15361"/>
    </cofactor>
    <text evidence="1">Binds 1 pyruvoyl group covalently per subunit.</text>
</comment>
<comment type="pathway">
    <text evidence="1">Phospholipid metabolism; phosphatidylethanolamine biosynthesis; phosphatidylethanolamine from CDP-diacylglycerol: step 2/2.</text>
</comment>
<comment type="subunit">
    <text evidence="1">Heterodimer of a large membrane-associated beta subunit and a small pyruvoyl-containing alpha subunit.</text>
</comment>
<comment type="subcellular location">
    <subcellularLocation>
        <location evidence="1">Cell membrane</location>
        <topology evidence="1">Peripheral membrane protein</topology>
    </subcellularLocation>
</comment>
<comment type="PTM">
    <text evidence="1">Is synthesized initially as an inactive proenzyme. Formation of the active enzyme involves a self-maturation process in which the active site pyruvoyl group is generated from an internal serine residue via an autocatalytic post-translational modification. Two non-identical subunits are generated from the proenzyme in this reaction, and the pyruvate is formed at the N-terminus of the alpha chain, which is derived from the carboxyl end of the proenzyme. The post-translation cleavage follows an unusual pathway, termed non-hydrolytic serinolysis, in which the side chain hydroxyl group of the serine supplies its oxygen atom to form the C-terminus of the beta chain, while the remainder of the serine residue undergoes an oxidative deamination to produce ammonia and the pyruvoyl prosthetic group on the alpha chain.</text>
</comment>
<comment type="similarity">
    <text evidence="1">Belongs to the phosphatidylserine decarboxylase family. PSD-A subfamily.</text>
</comment>
<protein>
    <recommendedName>
        <fullName evidence="1">Phosphatidylserine decarboxylase proenzyme</fullName>
        <ecNumber evidence="1">4.1.1.65</ecNumber>
    </recommendedName>
    <component>
        <recommendedName>
            <fullName evidence="1">Phosphatidylserine decarboxylase alpha chain</fullName>
        </recommendedName>
    </component>
    <component>
        <recommendedName>
            <fullName evidence="1">Phosphatidylserine decarboxylase beta chain</fullName>
        </recommendedName>
    </component>
</protein>